<gene>
    <name type="primary">bdbB</name>
    <name type="synonym">yolK</name>
    <name type="ordered locus">BSU21440</name>
</gene>
<comment type="function">
    <text evidence="3">Important but not absolutely essential for the production of the lantibiotic sublancin 168, it may also be required for the stability of other secreted proteins. Not required for competence for DNA uptake.</text>
</comment>
<comment type="subcellular location">
    <subcellularLocation>
        <location evidence="4">Cell membrane</location>
        <topology evidence="4">Multi-pass membrane protein</topology>
    </subcellularLocation>
</comment>
<comment type="similarity">
    <text evidence="4">Belongs to the DsbB family. BdbC subfamily.</text>
</comment>
<proteinExistence type="evidence at protein level"/>
<accession>P68571</accession>
<accession>O31985</accession>
<accession>O64037</accession>
<feature type="chain" id="PRO_0000059377" description="SPbeta prophage-derived disulfide bond formation protein B">
    <location>
        <begin position="1"/>
        <end position="148"/>
    </location>
</feature>
<feature type="transmembrane region" description="Helical" evidence="2">
    <location>
        <begin position="7"/>
        <end position="26"/>
    </location>
</feature>
<feature type="transmembrane region" description="Helical" evidence="2">
    <location>
        <begin position="41"/>
        <end position="60"/>
    </location>
</feature>
<feature type="transmembrane region" description="Helical" evidence="2">
    <location>
        <begin position="67"/>
        <end position="84"/>
    </location>
</feature>
<feature type="transmembrane region" description="Helical" evidence="2">
    <location>
        <begin position="111"/>
        <end position="135"/>
    </location>
</feature>
<feature type="disulfide bond" description="Redox-active" evidence="1">
    <location>
        <begin position="36"/>
        <end position="39"/>
    </location>
</feature>
<feature type="disulfide bond" description="Redox-active" evidence="1">
    <location>
        <begin position="95"/>
        <end position="102"/>
    </location>
</feature>
<protein>
    <recommendedName>
        <fullName>SPbeta prophage-derived disulfide bond formation protein B</fullName>
    </recommendedName>
    <alternativeName>
        <fullName>Disulfide oxidoreductase B</fullName>
    </alternativeName>
    <alternativeName>
        <fullName>Thiol-disulfide oxidoreductase B</fullName>
    </alternativeName>
</protein>
<evidence type="ECO:0000250" key="1"/>
<evidence type="ECO:0000255" key="2"/>
<evidence type="ECO:0000269" key="3">
    <source>
    </source>
</evidence>
<evidence type="ECO:0000305" key="4"/>
<keyword id="KW-1003">Cell membrane</keyword>
<keyword id="KW-0143">Chaperone</keyword>
<keyword id="KW-1015">Disulfide bond</keyword>
<keyword id="KW-0249">Electron transport</keyword>
<keyword id="KW-0472">Membrane</keyword>
<keyword id="KW-0560">Oxidoreductase</keyword>
<keyword id="KW-0676">Redox-active center</keyword>
<keyword id="KW-1185">Reference proteome</keyword>
<keyword id="KW-0812">Transmembrane</keyword>
<keyword id="KW-1133">Transmembrane helix</keyword>
<keyword id="KW-0813">Transport</keyword>
<organism>
    <name type="scientific">Bacillus subtilis (strain 168)</name>
    <dbReference type="NCBI Taxonomy" id="224308"/>
    <lineage>
        <taxon>Bacteria</taxon>
        <taxon>Bacillati</taxon>
        <taxon>Bacillota</taxon>
        <taxon>Bacilli</taxon>
        <taxon>Bacillales</taxon>
        <taxon>Bacillaceae</taxon>
        <taxon>Bacillus</taxon>
    </lineage>
</organism>
<name>BDBB_BACSU</name>
<sequence>MNTRYVKSFFLLLFFLSFFGTMASLFYSEIMHFKPCVLCWYQRIFLYPIPIILLIGLLKKDLNSIFYVVFLSSIGLIIAFYHYIIQLTQSKSVVCEIGTNSCAKIEVEYLGFITLPLMSSVCFALIFGIGLKLIIKSKKLKQNQHVYN</sequence>
<reference key="1">
    <citation type="journal article" date="1998" name="Microbiology">
        <title>The N-acetylmuramoyl-L-alanine amidase encoded by the Bacillus subtilis 168 prophage SP beta.</title>
        <authorList>
            <person name="Regamey A."/>
            <person name="Karamata D."/>
        </authorList>
    </citation>
    <scope>NUCLEOTIDE SEQUENCE [GENOMIC DNA]</scope>
    <source>
        <strain>168</strain>
    </source>
</reference>
<reference key="2">
    <citation type="journal article" date="1997" name="Nature">
        <title>The complete genome sequence of the Gram-positive bacterium Bacillus subtilis.</title>
        <authorList>
            <person name="Kunst F."/>
            <person name="Ogasawara N."/>
            <person name="Moszer I."/>
            <person name="Albertini A.M."/>
            <person name="Alloni G."/>
            <person name="Azevedo V."/>
            <person name="Bertero M.G."/>
            <person name="Bessieres P."/>
            <person name="Bolotin A."/>
            <person name="Borchert S."/>
            <person name="Borriss R."/>
            <person name="Boursier L."/>
            <person name="Brans A."/>
            <person name="Braun M."/>
            <person name="Brignell S.C."/>
            <person name="Bron S."/>
            <person name="Brouillet S."/>
            <person name="Bruschi C.V."/>
            <person name="Caldwell B."/>
            <person name="Capuano V."/>
            <person name="Carter N.M."/>
            <person name="Choi S.-K."/>
            <person name="Codani J.-J."/>
            <person name="Connerton I.F."/>
            <person name="Cummings N.J."/>
            <person name="Daniel R.A."/>
            <person name="Denizot F."/>
            <person name="Devine K.M."/>
            <person name="Duesterhoeft A."/>
            <person name="Ehrlich S.D."/>
            <person name="Emmerson P.T."/>
            <person name="Entian K.-D."/>
            <person name="Errington J."/>
            <person name="Fabret C."/>
            <person name="Ferrari E."/>
            <person name="Foulger D."/>
            <person name="Fritz C."/>
            <person name="Fujita M."/>
            <person name="Fujita Y."/>
            <person name="Fuma S."/>
            <person name="Galizzi A."/>
            <person name="Galleron N."/>
            <person name="Ghim S.-Y."/>
            <person name="Glaser P."/>
            <person name="Goffeau A."/>
            <person name="Golightly E.J."/>
            <person name="Grandi G."/>
            <person name="Guiseppi G."/>
            <person name="Guy B.J."/>
            <person name="Haga K."/>
            <person name="Haiech J."/>
            <person name="Harwood C.R."/>
            <person name="Henaut A."/>
            <person name="Hilbert H."/>
            <person name="Holsappel S."/>
            <person name="Hosono S."/>
            <person name="Hullo M.-F."/>
            <person name="Itaya M."/>
            <person name="Jones L.-M."/>
            <person name="Joris B."/>
            <person name="Karamata D."/>
            <person name="Kasahara Y."/>
            <person name="Klaerr-Blanchard M."/>
            <person name="Klein C."/>
            <person name="Kobayashi Y."/>
            <person name="Koetter P."/>
            <person name="Koningstein G."/>
            <person name="Krogh S."/>
            <person name="Kumano M."/>
            <person name="Kurita K."/>
            <person name="Lapidus A."/>
            <person name="Lardinois S."/>
            <person name="Lauber J."/>
            <person name="Lazarevic V."/>
            <person name="Lee S.-M."/>
            <person name="Levine A."/>
            <person name="Liu H."/>
            <person name="Masuda S."/>
            <person name="Mauel C."/>
            <person name="Medigue C."/>
            <person name="Medina N."/>
            <person name="Mellado R.P."/>
            <person name="Mizuno M."/>
            <person name="Moestl D."/>
            <person name="Nakai S."/>
            <person name="Noback M."/>
            <person name="Noone D."/>
            <person name="O'Reilly M."/>
            <person name="Ogawa K."/>
            <person name="Ogiwara A."/>
            <person name="Oudega B."/>
            <person name="Park S.-H."/>
            <person name="Parro V."/>
            <person name="Pohl T.M."/>
            <person name="Portetelle D."/>
            <person name="Porwollik S."/>
            <person name="Prescott A.M."/>
            <person name="Presecan E."/>
            <person name="Pujic P."/>
            <person name="Purnelle B."/>
            <person name="Rapoport G."/>
            <person name="Rey M."/>
            <person name="Reynolds S."/>
            <person name="Rieger M."/>
            <person name="Rivolta C."/>
            <person name="Rocha E."/>
            <person name="Roche B."/>
            <person name="Rose M."/>
            <person name="Sadaie Y."/>
            <person name="Sato T."/>
            <person name="Scanlan E."/>
            <person name="Schleich S."/>
            <person name="Schroeter R."/>
            <person name="Scoffone F."/>
            <person name="Sekiguchi J."/>
            <person name="Sekowska A."/>
            <person name="Seror S.J."/>
            <person name="Serror P."/>
            <person name="Shin B.-S."/>
            <person name="Soldo B."/>
            <person name="Sorokin A."/>
            <person name="Tacconi E."/>
            <person name="Takagi T."/>
            <person name="Takahashi H."/>
            <person name="Takemaru K."/>
            <person name="Takeuchi M."/>
            <person name="Tamakoshi A."/>
            <person name="Tanaka T."/>
            <person name="Terpstra P."/>
            <person name="Tognoni A."/>
            <person name="Tosato V."/>
            <person name="Uchiyama S."/>
            <person name="Vandenbol M."/>
            <person name="Vannier F."/>
            <person name="Vassarotti A."/>
            <person name="Viari A."/>
            <person name="Wambutt R."/>
            <person name="Wedler E."/>
            <person name="Wedler H."/>
            <person name="Weitzenegger T."/>
            <person name="Winters P."/>
            <person name="Wipat A."/>
            <person name="Yamamoto H."/>
            <person name="Yamane K."/>
            <person name="Yasumoto K."/>
            <person name="Yata K."/>
            <person name="Yoshida K."/>
            <person name="Yoshikawa H.-F."/>
            <person name="Zumstein E."/>
            <person name="Yoshikawa H."/>
            <person name="Danchin A."/>
        </authorList>
    </citation>
    <scope>NUCLEOTIDE SEQUENCE [LARGE SCALE GENOMIC DNA]</scope>
    <source>
        <strain>168</strain>
    </source>
</reference>
<reference key="3">
    <citation type="journal article" date="1999" name="J. Biol. Chem.">
        <title>Functional analysis of paralogous thiol-disulfide oxidoreductases in Bacillus subtilis.</title>
        <authorList>
            <person name="Bolhuis A."/>
            <person name="Venema G."/>
            <person name="Quax W.J."/>
            <person name="Bron S."/>
            <person name="van Dijl J.M."/>
        </authorList>
    </citation>
    <scope>IDENTIFICATION OF FUNCTION</scope>
    <source>
        <strain>168</strain>
    </source>
</reference>
<reference key="4">
    <citation type="journal article" date="2002" name="J. Biol. Chem.">
        <title>Thiol-disulfide oxidoreductases are essential for the production of the lantibiotic sublancin 168.</title>
        <authorList>
            <person name="Dorenbos R."/>
            <person name="Stein T."/>
            <person name="Kabel J."/>
            <person name="Bruand C."/>
            <person name="Bolhuis A."/>
            <person name="Bron S."/>
            <person name="Quax W.J."/>
            <person name="Van Dijl J.M."/>
        </authorList>
    </citation>
    <scope>FUNCTION IN PRODUCTION OF SUBLANCIN 168</scope>
    <source>
        <strain>168</strain>
    </source>
</reference>
<dbReference type="EMBL" id="AF021803">
    <property type="protein sequence ID" value="AAC38303.1"/>
    <property type="molecule type" value="Genomic_DNA"/>
</dbReference>
<dbReference type="EMBL" id="AL009126">
    <property type="protein sequence ID" value="CAB14062.1"/>
    <property type="molecule type" value="Genomic_DNA"/>
</dbReference>
<dbReference type="RefSeq" id="NP_390027.1">
    <property type="nucleotide sequence ID" value="NC_000964.3"/>
</dbReference>
<dbReference type="RefSeq" id="WP_009967541.1">
    <property type="nucleotide sequence ID" value="NZ_OZ025638.1"/>
</dbReference>
<dbReference type="FunCoup" id="P68571">
    <property type="interactions" value="13"/>
</dbReference>
<dbReference type="STRING" id="224308.BSU21440"/>
<dbReference type="PaxDb" id="224308-BSU21440"/>
<dbReference type="EnsemblBacteria" id="CAB14062">
    <property type="protein sequence ID" value="CAB14062"/>
    <property type="gene ID" value="BSU_21440"/>
</dbReference>
<dbReference type="GeneID" id="939128"/>
<dbReference type="KEGG" id="bsu:BSU21440"/>
<dbReference type="PATRIC" id="fig|224308.179.peg.2341"/>
<dbReference type="eggNOG" id="COG1495">
    <property type="taxonomic scope" value="Bacteria"/>
</dbReference>
<dbReference type="InParanoid" id="P68571"/>
<dbReference type="OrthoDB" id="158402at2"/>
<dbReference type="PhylomeDB" id="P68571"/>
<dbReference type="BioCyc" id="BSUB:BSU21440-MONOMER"/>
<dbReference type="Proteomes" id="UP000001570">
    <property type="component" value="Chromosome"/>
</dbReference>
<dbReference type="GO" id="GO:0005886">
    <property type="term" value="C:plasma membrane"/>
    <property type="evidence" value="ECO:0007669"/>
    <property type="project" value="UniProtKB-SubCell"/>
</dbReference>
<dbReference type="GO" id="GO:0015035">
    <property type="term" value="F:protein-disulfide reductase activity"/>
    <property type="evidence" value="ECO:0007669"/>
    <property type="project" value="UniProtKB-UniRule"/>
</dbReference>
<dbReference type="GO" id="GO:0006457">
    <property type="term" value="P:protein folding"/>
    <property type="evidence" value="ECO:0007669"/>
    <property type="project" value="InterPro"/>
</dbReference>
<dbReference type="Gene3D" id="1.20.1550.10">
    <property type="entry name" value="DsbB-like"/>
    <property type="match status" value="1"/>
</dbReference>
<dbReference type="HAMAP" id="MF_00287">
    <property type="entry name" value="BdbC"/>
    <property type="match status" value="1"/>
</dbReference>
<dbReference type="InterPro" id="IPR003752">
    <property type="entry name" value="DiS_bond_form_DsbB/BdbC"/>
</dbReference>
<dbReference type="InterPro" id="IPR012187">
    <property type="entry name" value="Disulphide_bond_form_BdbC"/>
</dbReference>
<dbReference type="InterPro" id="IPR023380">
    <property type="entry name" value="DsbB-like_sf"/>
</dbReference>
<dbReference type="PANTHER" id="PTHR43469">
    <property type="entry name" value="DISULFIDE FORMATION PROTEIN-RELATED"/>
    <property type="match status" value="1"/>
</dbReference>
<dbReference type="PANTHER" id="PTHR43469:SF1">
    <property type="entry name" value="SPBETA PROPHAGE-DERIVED DISULFIDE BOND FORMATION PROTEIN B"/>
    <property type="match status" value="1"/>
</dbReference>
<dbReference type="Pfam" id="PF02600">
    <property type="entry name" value="DsbB"/>
    <property type="match status" value="1"/>
</dbReference>
<dbReference type="PIRSF" id="PIRSF036659">
    <property type="entry name" value="BdbC"/>
    <property type="match status" value="1"/>
</dbReference>
<dbReference type="SUPFAM" id="SSF158442">
    <property type="entry name" value="DsbB-like"/>
    <property type="match status" value="1"/>
</dbReference>